<protein>
    <recommendedName>
        <fullName>2-hydroxyisoflavanone synthase</fullName>
        <shortName>2HI synthase</shortName>
        <ecNumber evidence="2">1.14.14.87</ecNumber>
    </recommendedName>
    <alternativeName>
        <fullName>Cytochrome P450 93C2</fullName>
    </alternativeName>
    <alternativeName>
        <fullName>Isoflavonoid synthase</fullName>
    </alternativeName>
</protein>
<reference key="1">
    <citation type="submission" date="2011-05" db="EMBL/GenBank/DDBJ databases">
        <authorList>
            <person name="Wang X."/>
        </authorList>
    </citation>
    <scope>NUCLEOTIDE SEQUENCE [MRNA]</scope>
</reference>
<keyword id="KW-0256">Endoplasmic reticulum</keyword>
<keyword id="KW-0349">Heme</keyword>
<keyword id="KW-0408">Iron</keyword>
<keyword id="KW-0472">Membrane</keyword>
<keyword id="KW-0479">Metal-binding</keyword>
<keyword id="KW-0492">Microsome</keyword>
<keyword id="KW-0503">Monooxygenase</keyword>
<keyword id="KW-0521">NADP</keyword>
<keyword id="KW-0560">Oxidoreductase</keyword>
<keyword id="KW-0812">Transmembrane</keyword>
<keyword id="KW-1133">Transmembrane helix</keyword>
<evidence type="ECO:0000250" key="1"/>
<evidence type="ECO:0000250" key="2">
    <source>
        <dbReference type="UniProtKB" id="Q9SXS3"/>
    </source>
</evidence>
<evidence type="ECO:0000255" key="3"/>
<evidence type="ECO:0000305" key="4"/>
<comment type="function">
    <text evidence="2">2-hydroxyisoflavanone synthase, which catalyzes the hydroxylation associated with 1,2-aryl migration of flavanones. Converts liquiritigenin and naringenin into highly unstable precursors of the isoflavones daidzein and genistein.</text>
</comment>
<comment type="catalytic activity">
    <reaction evidence="2">
        <text>(2S)-liquiritigenin + reduced [NADPH--hemoprotein reductase] + O2 = (2R,3S)-2,4',7-trihydroxyisoflavanone + oxidized [NADPH--hemoprotein reductase] + H2O + H(+)</text>
        <dbReference type="Rhea" id="RHEA:31723"/>
        <dbReference type="Rhea" id="RHEA-COMP:11964"/>
        <dbReference type="Rhea" id="RHEA-COMP:11965"/>
        <dbReference type="ChEBI" id="CHEBI:15377"/>
        <dbReference type="ChEBI" id="CHEBI:15378"/>
        <dbReference type="ChEBI" id="CHEBI:15379"/>
        <dbReference type="ChEBI" id="CHEBI:28777"/>
        <dbReference type="ChEBI" id="CHEBI:57618"/>
        <dbReference type="ChEBI" id="CHEBI:58210"/>
        <dbReference type="ChEBI" id="CHEBI:63325"/>
        <dbReference type="EC" id="1.14.14.87"/>
    </reaction>
</comment>
<comment type="catalytic activity">
    <reaction evidence="2">
        <text>(2S)-naringenin + reduced [NADPH--hemoprotein reductase] + O2 = 2-hydroxy-2,3-dihydrogenistein + oxidized [NADPH--hemoprotein reductase] + H2O + H(+)</text>
        <dbReference type="Rhea" id="RHEA:35487"/>
        <dbReference type="Rhea" id="RHEA-COMP:11964"/>
        <dbReference type="Rhea" id="RHEA-COMP:11965"/>
        <dbReference type="ChEBI" id="CHEBI:15377"/>
        <dbReference type="ChEBI" id="CHEBI:15378"/>
        <dbReference type="ChEBI" id="CHEBI:15379"/>
        <dbReference type="ChEBI" id="CHEBI:17846"/>
        <dbReference type="ChEBI" id="CHEBI:31080"/>
        <dbReference type="ChEBI" id="CHEBI:57618"/>
        <dbReference type="ChEBI" id="CHEBI:58210"/>
        <dbReference type="EC" id="1.14.14.87"/>
    </reaction>
</comment>
<comment type="cofactor">
    <cofactor evidence="1">
        <name>heme</name>
        <dbReference type="ChEBI" id="CHEBI:30413"/>
    </cofactor>
</comment>
<comment type="subcellular location">
    <subcellularLocation>
        <location evidence="1">Microsome membrane</location>
        <topology evidence="4">Single-pass membrane protein</topology>
    </subcellularLocation>
</comment>
<comment type="similarity">
    <text evidence="4">Belongs to the cytochrome P450 family.</text>
</comment>
<proteinExistence type="evidence at transcript level"/>
<feature type="chain" id="PRO_0000419823" description="2-hydroxyisoflavanone synthase">
    <location>
        <begin position="1"/>
        <end position="523"/>
    </location>
</feature>
<feature type="transmembrane region" description="Helical" evidence="3">
    <location>
        <begin position="2"/>
        <end position="22"/>
    </location>
</feature>
<feature type="binding site" description="axial binding residue" evidence="1">
    <location>
        <position position="450"/>
    </location>
    <ligand>
        <name>heme</name>
        <dbReference type="ChEBI" id="CHEBI:30413"/>
    </ligand>
    <ligandPart>
        <name>Fe</name>
        <dbReference type="ChEBI" id="CHEBI:18248"/>
    </ligandPart>
</feature>
<feature type="sequence conflict" description="In Ref. 1; AEQ39023." evidence="4" ref="1">
    <original>P</original>
    <variation>S</variation>
    <location>
        <position position="108"/>
    </location>
</feature>
<name>C93C2_GLYUR</name>
<accession>G4XV71</accession>
<accession>G4XV72</accession>
<sequence length="523" mass="59242">MLVELAITLLVIALFIHLRPTPSAKSKSLRHLPNPPSPKPRLPFVGHLHLLDKPLLHNSLIDLSKRYGPLYSLYFGSMPTVVVSTPELFKLFLQTHEASSFNTRFQTPAIRRLTYDNSVAMVPFGPYWKFIRKLIMNDLLNATTVNKLRPLRSQEIRKVLRVMALSAESQVPLNVTEELLKWTNSTISRMMLGEAEEIRDIARDVLKIFGEYSLTDFIWPLKKLKVGQYEKRIDDIFNRFDPVIERVIKKRQEIRKKRKERNGEVEEGEQSVVFLDTLLDFAEDETMEIKITKEQIKGLVVDFFSAGTDSTAVATEWALSELINNPRVLQKAREEVDAVVGKDRLVDEADVQNLPYIRSIVKETFRMHPPLPVVKRKCVQECEIDGYAIPEGALILFNVWAVGRDPKYWDRPTEFRPERFLENVGEGDQAVDLRGQHFQLLPFGSGRRMCPGVNLATAGMATLLASVIQCFDLSVVGPQGKILKGNDAKVSMEESAGLTVPRAHNLVCVPVARSSAVPKLFSS</sequence>
<gene>
    <name type="primary">CYP93C2</name>
    <name type="synonym">IFS1</name>
    <name type="synonym">IFS2</name>
</gene>
<organism>
    <name type="scientific">Glycyrrhiza uralensis</name>
    <name type="common">Chinese licorice</name>
    <name type="synonym">Glycyrrhiza shiheziensis</name>
    <dbReference type="NCBI Taxonomy" id="74613"/>
    <lineage>
        <taxon>Eukaryota</taxon>
        <taxon>Viridiplantae</taxon>
        <taxon>Streptophyta</taxon>
        <taxon>Embryophyta</taxon>
        <taxon>Tracheophyta</taxon>
        <taxon>Spermatophyta</taxon>
        <taxon>Magnoliopsida</taxon>
        <taxon>eudicotyledons</taxon>
        <taxon>Gunneridae</taxon>
        <taxon>Pentapetalae</taxon>
        <taxon>rosids</taxon>
        <taxon>fabids</taxon>
        <taxon>Fabales</taxon>
        <taxon>Fabaceae</taxon>
        <taxon>Papilionoideae</taxon>
        <taxon>50 kb inversion clade</taxon>
        <taxon>NPAAA clade</taxon>
        <taxon>Hologalegina</taxon>
        <taxon>IRL clade</taxon>
        <taxon>Galegeae</taxon>
        <taxon>Glycyrrhiza</taxon>
    </lineage>
</organism>
<dbReference type="EC" id="1.14.14.87" evidence="2"/>
<dbReference type="EMBL" id="JF912327">
    <property type="protein sequence ID" value="AEQ39022.1"/>
    <property type="molecule type" value="mRNA"/>
</dbReference>
<dbReference type="EMBL" id="JF912328">
    <property type="protein sequence ID" value="AEQ39023.1"/>
    <property type="molecule type" value="mRNA"/>
</dbReference>
<dbReference type="SMR" id="G4XV71"/>
<dbReference type="GO" id="GO:0005783">
    <property type="term" value="C:endoplasmic reticulum"/>
    <property type="evidence" value="ECO:0007669"/>
    <property type="project" value="UniProtKB-KW"/>
</dbReference>
<dbReference type="GO" id="GO:0043231">
    <property type="term" value="C:intracellular membrane-bounded organelle"/>
    <property type="evidence" value="ECO:0000250"/>
    <property type="project" value="UniProtKB"/>
</dbReference>
<dbReference type="GO" id="GO:0016020">
    <property type="term" value="C:membrane"/>
    <property type="evidence" value="ECO:0007669"/>
    <property type="project" value="UniProtKB-KW"/>
</dbReference>
<dbReference type="GO" id="GO:0033770">
    <property type="term" value="F:2-hydroxyisoflavanone synthase activity"/>
    <property type="evidence" value="ECO:0007669"/>
    <property type="project" value="UniProtKB-EC"/>
</dbReference>
<dbReference type="GO" id="GO:0020037">
    <property type="term" value="F:heme binding"/>
    <property type="evidence" value="ECO:0007669"/>
    <property type="project" value="InterPro"/>
</dbReference>
<dbReference type="GO" id="GO:0005506">
    <property type="term" value="F:iron ion binding"/>
    <property type="evidence" value="ECO:0007669"/>
    <property type="project" value="InterPro"/>
</dbReference>
<dbReference type="GO" id="GO:0016709">
    <property type="term" value="F:oxidoreductase activity, acting on paired donors, with incorporation or reduction of molecular oxygen, NAD(P)H as one donor, and incorporation of one atom of oxygen"/>
    <property type="evidence" value="ECO:0000250"/>
    <property type="project" value="UniProtKB"/>
</dbReference>
<dbReference type="GO" id="GO:0009717">
    <property type="term" value="P:isoflavonoid biosynthetic process"/>
    <property type="evidence" value="ECO:0000250"/>
    <property type="project" value="UniProtKB"/>
</dbReference>
<dbReference type="CDD" id="cd20655">
    <property type="entry name" value="CYP93"/>
    <property type="match status" value="1"/>
</dbReference>
<dbReference type="FunFam" id="1.10.630.10:FF:000019">
    <property type="entry name" value="Cytochrome P450 family protein"/>
    <property type="match status" value="1"/>
</dbReference>
<dbReference type="Gene3D" id="1.10.630.10">
    <property type="entry name" value="Cytochrome P450"/>
    <property type="match status" value="1"/>
</dbReference>
<dbReference type="InterPro" id="IPR001128">
    <property type="entry name" value="Cyt_P450"/>
</dbReference>
<dbReference type="InterPro" id="IPR017972">
    <property type="entry name" value="Cyt_P450_CS"/>
</dbReference>
<dbReference type="InterPro" id="IPR002401">
    <property type="entry name" value="Cyt_P450_E_grp-I"/>
</dbReference>
<dbReference type="InterPro" id="IPR036396">
    <property type="entry name" value="Cyt_P450_sf"/>
</dbReference>
<dbReference type="PANTHER" id="PTHR47944:SF17">
    <property type="entry name" value="3,9-DIHYDROXYPTEROCARPAN 6A-MONOOXYGENASE"/>
    <property type="match status" value="1"/>
</dbReference>
<dbReference type="PANTHER" id="PTHR47944">
    <property type="entry name" value="CYTOCHROME P450 98A9"/>
    <property type="match status" value="1"/>
</dbReference>
<dbReference type="Pfam" id="PF00067">
    <property type="entry name" value="p450"/>
    <property type="match status" value="1"/>
</dbReference>
<dbReference type="PRINTS" id="PR00463">
    <property type="entry name" value="EP450I"/>
</dbReference>
<dbReference type="PRINTS" id="PR00385">
    <property type="entry name" value="P450"/>
</dbReference>
<dbReference type="SUPFAM" id="SSF48264">
    <property type="entry name" value="Cytochrome P450"/>
    <property type="match status" value="1"/>
</dbReference>
<dbReference type="PROSITE" id="PS00086">
    <property type="entry name" value="CYTOCHROME_P450"/>
    <property type="match status" value="1"/>
</dbReference>